<gene>
    <name type="primary">ubq-2</name>
    <name type="synonym">ubib</name>
    <name type="ORF">ZK1010.1</name>
</gene>
<dbReference type="EMBL" id="L31492">
    <property type="protein sequence ID" value="AAC37252.1"/>
    <property type="molecule type" value="Genomic_DNA"/>
</dbReference>
<dbReference type="EMBL" id="Z82083">
    <property type="protein sequence ID" value="CAB04967.1"/>
    <property type="molecule type" value="Genomic_DNA"/>
</dbReference>
<dbReference type="PIR" id="T27638">
    <property type="entry name" value="T27638"/>
</dbReference>
<dbReference type="RefSeq" id="NP_499695.1">
    <property type="nucleotide sequence ID" value="NM_067294.6"/>
</dbReference>
<dbReference type="PDB" id="9BH5">
    <property type="method" value="EM"/>
    <property type="resolution" value="2.63 A"/>
    <property type="chains" value="Cm=1-128"/>
</dbReference>
<dbReference type="PDB" id="9CAI">
    <property type="method" value="EM"/>
    <property type="resolution" value="2.59 A"/>
    <property type="chains" value="Cm=1-128"/>
</dbReference>
<dbReference type="PDBsum" id="9BH5"/>
<dbReference type="PDBsum" id="9CAI"/>
<dbReference type="EMDB" id="EMD-44533"/>
<dbReference type="EMDB" id="EMD-45392"/>
<dbReference type="SMR" id="P49632"/>
<dbReference type="BioGRID" id="41891">
    <property type="interactions" value="99"/>
</dbReference>
<dbReference type="FunCoup" id="P49632">
    <property type="interactions" value="2732"/>
</dbReference>
<dbReference type="STRING" id="6239.ZK1010.1.1"/>
<dbReference type="PaxDb" id="6239-ZK1010.1"/>
<dbReference type="PeptideAtlas" id="P49632"/>
<dbReference type="EnsemblMetazoa" id="ZK1010.1.1">
    <property type="protein sequence ID" value="ZK1010.1.1"/>
    <property type="gene ID" value="WBGene00006728"/>
</dbReference>
<dbReference type="GeneID" id="176718"/>
<dbReference type="KEGG" id="cel:CELE_ZK1010.1"/>
<dbReference type="UCSC" id="ZK1010.1.1">
    <property type="organism name" value="c. elegans"/>
</dbReference>
<dbReference type="AGR" id="WB:WBGene00006728"/>
<dbReference type="CTD" id="176718"/>
<dbReference type="WormBase" id="ZK1010.1">
    <property type="protein sequence ID" value="CE15495"/>
    <property type="gene ID" value="WBGene00006728"/>
    <property type="gene designation" value="ubq-2"/>
</dbReference>
<dbReference type="eggNOG" id="KOG0003">
    <property type="taxonomic scope" value="Eukaryota"/>
</dbReference>
<dbReference type="GeneTree" id="ENSGT00940000153593"/>
<dbReference type="HOGENOM" id="CLU_010412_3_4_1"/>
<dbReference type="InParanoid" id="P49632"/>
<dbReference type="OMA" id="AMKYNCE"/>
<dbReference type="OrthoDB" id="428577at2759"/>
<dbReference type="PhylomeDB" id="P49632"/>
<dbReference type="Reactome" id="R-CEL-110312">
    <property type="pathway name" value="Translesion synthesis by REV1"/>
</dbReference>
<dbReference type="Reactome" id="R-CEL-110314">
    <property type="pathway name" value="Recognition of DNA damage by PCNA-containing replication complex"/>
</dbReference>
<dbReference type="Reactome" id="R-CEL-110320">
    <property type="pathway name" value="Translesion Synthesis by POLH"/>
</dbReference>
<dbReference type="Reactome" id="R-CEL-1234176">
    <property type="pathway name" value="Oxygen-dependent proline hydroxylation of Hypoxia-inducible Factor Alpha"/>
</dbReference>
<dbReference type="Reactome" id="R-CEL-1253288">
    <property type="pathway name" value="Downregulation of ERBB4 signaling"/>
</dbReference>
<dbReference type="Reactome" id="R-CEL-182971">
    <property type="pathway name" value="EGFR downregulation"/>
</dbReference>
<dbReference type="Reactome" id="R-CEL-187577">
    <property type="pathway name" value="SCF(Skp2)-mediated degradation of p27/p21"/>
</dbReference>
<dbReference type="Reactome" id="R-CEL-195253">
    <property type="pathway name" value="Degradation of beta-catenin by the destruction complex"/>
</dbReference>
<dbReference type="Reactome" id="R-CEL-2173788">
    <property type="pathway name" value="Downregulation of TGF-beta receptor signaling"/>
</dbReference>
<dbReference type="Reactome" id="R-CEL-2173791">
    <property type="pathway name" value="TGF-beta receptor signaling in EMT (epithelial to mesenchymal transition)"/>
</dbReference>
<dbReference type="Reactome" id="R-CEL-2173795">
    <property type="pathway name" value="Downregulation of SMAD2/3:SMAD4 transcriptional activity"/>
</dbReference>
<dbReference type="Reactome" id="R-CEL-2173796">
    <property type="pathway name" value="SMAD2/SMAD3:SMAD4 heterotrimer regulates transcription"/>
</dbReference>
<dbReference type="Reactome" id="R-CEL-2565942">
    <property type="pathway name" value="Regulation of PLK1 Activity at G2/M Transition"/>
</dbReference>
<dbReference type="Reactome" id="R-CEL-2672351">
    <property type="pathway name" value="Stimuli-sensing channels"/>
</dbReference>
<dbReference type="Reactome" id="R-CEL-3134975">
    <property type="pathway name" value="Regulation of innate immune responses to cytosolic DNA"/>
</dbReference>
<dbReference type="Reactome" id="R-CEL-349425">
    <property type="pathway name" value="Autodegradation of the E3 ubiquitin ligase COP1"/>
</dbReference>
<dbReference type="Reactome" id="R-CEL-382556">
    <property type="pathway name" value="ABC-family proteins mediated transport"/>
</dbReference>
<dbReference type="Reactome" id="R-CEL-4641258">
    <property type="pathway name" value="Degradation of DVL"/>
</dbReference>
<dbReference type="Reactome" id="R-CEL-4641263">
    <property type="pathway name" value="Regulation of FZD by ubiquitination"/>
</dbReference>
<dbReference type="Reactome" id="R-CEL-532668">
    <property type="pathway name" value="N-glycan trimming in the ER and Calnexin/Calreticulin cycle"/>
</dbReference>
<dbReference type="Reactome" id="R-CEL-5357905">
    <property type="pathway name" value="Regulation of TNFR1 signaling"/>
</dbReference>
<dbReference type="Reactome" id="R-CEL-5358346">
    <property type="pathway name" value="Hedgehog ligand biogenesis"/>
</dbReference>
<dbReference type="Reactome" id="R-CEL-5632684">
    <property type="pathway name" value="Hedgehog 'on' state"/>
</dbReference>
<dbReference type="Reactome" id="R-CEL-5655862">
    <property type="pathway name" value="Translesion synthesis by POLK"/>
</dbReference>
<dbReference type="Reactome" id="R-CEL-5656121">
    <property type="pathway name" value="Translesion synthesis by POLI"/>
</dbReference>
<dbReference type="Reactome" id="R-CEL-5675221">
    <property type="pathway name" value="Negative regulation of MAPK pathway"/>
</dbReference>
<dbReference type="Reactome" id="R-CEL-5687128">
    <property type="pathway name" value="MAPK6/MAPK4 signaling"/>
</dbReference>
<dbReference type="Reactome" id="R-CEL-5689603">
    <property type="pathway name" value="UCH proteinases"/>
</dbReference>
<dbReference type="Reactome" id="R-CEL-5689877">
    <property type="pathway name" value="Josephin domain DUBs"/>
</dbReference>
<dbReference type="Reactome" id="R-CEL-5689880">
    <property type="pathway name" value="Ub-specific processing proteases"/>
</dbReference>
<dbReference type="Reactome" id="R-CEL-5689896">
    <property type="pathway name" value="Ovarian tumor domain proteases"/>
</dbReference>
<dbReference type="Reactome" id="R-CEL-5689901">
    <property type="pathway name" value="Metalloprotease DUBs"/>
</dbReference>
<dbReference type="Reactome" id="R-CEL-5696394">
    <property type="pathway name" value="DNA Damage Recognition in GG-NER"/>
</dbReference>
<dbReference type="Reactome" id="R-CEL-5696395">
    <property type="pathway name" value="Formation of Incision Complex in GG-NER"/>
</dbReference>
<dbReference type="Reactome" id="R-CEL-5696397">
    <property type="pathway name" value="Gap-filling DNA repair synthesis and ligation in GG-NER"/>
</dbReference>
<dbReference type="Reactome" id="R-CEL-5696400">
    <property type="pathway name" value="Dual Incision in GG-NER"/>
</dbReference>
<dbReference type="Reactome" id="R-CEL-6781823">
    <property type="pathway name" value="Formation of TC-NER Pre-Incision Complex"/>
</dbReference>
<dbReference type="Reactome" id="R-CEL-6782135">
    <property type="pathway name" value="Dual incision in TC-NER"/>
</dbReference>
<dbReference type="Reactome" id="R-CEL-6782210">
    <property type="pathway name" value="Gap-filling DNA repair synthesis and ligation in TC-NER"/>
</dbReference>
<dbReference type="Reactome" id="R-CEL-6807004">
    <property type="pathway name" value="Negative regulation of MET activity"/>
</dbReference>
<dbReference type="Reactome" id="R-CEL-68949">
    <property type="pathway name" value="Orc1 removal from chromatin"/>
</dbReference>
<dbReference type="Reactome" id="R-CEL-69017">
    <property type="pathway name" value="CDK-mediated phosphorylation and removal of Cdc6"/>
</dbReference>
<dbReference type="Reactome" id="R-CEL-69231">
    <property type="pathway name" value="Cyclin D associated events in G1"/>
</dbReference>
<dbReference type="Reactome" id="R-CEL-69601">
    <property type="pathway name" value="Ubiquitin Mediated Degradation of Phosphorylated Cdc25A"/>
</dbReference>
<dbReference type="Reactome" id="R-CEL-75815">
    <property type="pathway name" value="Ubiquitin-dependent degradation of Cyclin D"/>
</dbReference>
<dbReference type="Reactome" id="R-CEL-8849469">
    <property type="pathway name" value="PTK6 Regulates RTKs and Their Effectors AKT1 and DOK1"/>
</dbReference>
<dbReference type="Reactome" id="R-CEL-8854050">
    <property type="pathway name" value="FBXL7 down-regulates AURKA during mitotic entry and in early mitosis"/>
</dbReference>
<dbReference type="Reactome" id="R-CEL-8856825">
    <property type="pathway name" value="Cargo recognition for clathrin-mediated endocytosis"/>
</dbReference>
<dbReference type="Reactome" id="R-CEL-8856828">
    <property type="pathway name" value="Clathrin-mediated endocytosis"/>
</dbReference>
<dbReference type="Reactome" id="R-CEL-8863795">
    <property type="pathway name" value="Downregulation of ERBB2 signaling"/>
</dbReference>
<dbReference type="Reactome" id="R-CEL-8866652">
    <property type="pathway name" value="Synthesis of active ubiquitin: roles of E1 and E2 enzymes"/>
</dbReference>
<dbReference type="Reactome" id="R-CEL-8866654">
    <property type="pathway name" value="E3 ubiquitin ligases ubiquitinate target proteins"/>
</dbReference>
<dbReference type="Reactome" id="R-CEL-8939902">
    <property type="pathway name" value="Regulation of RUNX2 expression and activity"/>
</dbReference>
<dbReference type="Reactome" id="R-CEL-8941858">
    <property type="pathway name" value="Regulation of RUNX3 expression and activity"/>
</dbReference>
<dbReference type="Reactome" id="R-CEL-8948747">
    <property type="pathway name" value="Regulation of PTEN localization"/>
</dbReference>
<dbReference type="Reactome" id="R-CEL-8948751">
    <property type="pathway name" value="Regulation of PTEN stability and activity"/>
</dbReference>
<dbReference type="Reactome" id="R-CEL-8951664">
    <property type="pathway name" value="Neddylation"/>
</dbReference>
<dbReference type="Reactome" id="R-CEL-901032">
    <property type="pathway name" value="ER Quality Control Compartment (ERQC)"/>
</dbReference>
<dbReference type="Reactome" id="R-CEL-9020702">
    <property type="pathway name" value="Interleukin-1 signaling"/>
</dbReference>
<dbReference type="Reactome" id="R-CEL-9033241">
    <property type="pathway name" value="Peroxisomal protein import"/>
</dbReference>
<dbReference type="Reactome" id="R-CEL-912631">
    <property type="pathway name" value="Regulation of signaling by CBL"/>
</dbReference>
<dbReference type="Reactome" id="R-CEL-917729">
    <property type="pathway name" value="Endosomal Sorting Complex Required For Transport (ESCRT)"/>
</dbReference>
<dbReference type="Reactome" id="R-CEL-917937">
    <property type="pathway name" value="Iron uptake and transport"/>
</dbReference>
<dbReference type="Reactome" id="R-CEL-936440">
    <property type="pathway name" value="Negative regulators of DDX58/IFIH1 signaling"/>
</dbReference>
<dbReference type="Reactome" id="R-CEL-9646399">
    <property type="pathway name" value="Aggrephagy"/>
</dbReference>
<dbReference type="Reactome" id="R-CEL-9648002">
    <property type="pathway name" value="RAS processing"/>
</dbReference>
<dbReference type="Reactome" id="R-CEL-9755511">
    <property type="pathway name" value="KEAP1-NFE2L2 pathway"/>
</dbReference>
<dbReference type="Reactome" id="R-CEL-9762114">
    <property type="pathway name" value="GSK3B and BTRC:CUL1-mediated-degradation of NFE2L2"/>
</dbReference>
<dbReference type="Reactome" id="R-CEL-983168">
    <property type="pathway name" value="Antigen processing: Ubiquitination &amp; Proteasome degradation"/>
</dbReference>
<dbReference type="PRO" id="PR:P49632"/>
<dbReference type="Proteomes" id="UP000001940">
    <property type="component" value="Chromosome III"/>
</dbReference>
<dbReference type="Bgee" id="WBGene00006728">
    <property type="expression patterns" value="Expressed in pharyngeal muscle cell (C elegans) and 4 other cell types or tissues"/>
</dbReference>
<dbReference type="GO" id="GO:0005737">
    <property type="term" value="C:cytoplasm"/>
    <property type="evidence" value="ECO:0000318"/>
    <property type="project" value="GO_Central"/>
</dbReference>
<dbReference type="GO" id="GO:0005634">
    <property type="term" value="C:nucleus"/>
    <property type="evidence" value="ECO:0000318"/>
    <property type="project" value="GO_Central"/>
</dbReference>
<dbReference type="GO" id="GO:1990904">
    <property type="term" value="C:ribonucleoprotein complex"/>
    <property type="evidence" value="ECO:0007669"/>
    <property type="project" value="UniProtKB-KW"/>
</dbReference>
<dbReference type="GO" id="GO:0005840">
    <property type="term" value="C:ribosome"/>
    <property type="evidence" value="ECO:0007669"/>
    <property type="project" value="UniProtKB-KW"/>
</dbReference>
<dbReference type="GO" id="GO:0031386">
    <property type="term" value="F:protein tag activity"/>
    <property type="evidence" value="ECO:0000318"/>
    <property type="project" value="GO_Central"/>
</dbReference>
<dbReference type="GO" id="GO:0003735">
    <property type="term" value="F:structural constituent of ribosome"/>
    <property type="evidence" value="ECO:0007669"/>
    <property type="project" value="InterPro"/>
</dbReference>
<dbReference type="GO" id="GO:0031625">
    <property type="term" value="F:ubiquitin protein ligase binding"/>
    <property type="evidence" value="ECO:0000318"/>
    <property type="project" value="GO_Central"/>
</dbReference>
<dbReference type="GO" id="GO:0019941">
    <property type="term" value="P:modification-dependent protein catabolic process"/>
    <property type="evidence" value="ECO:0000318"/>
    <property type="project" value="GO_Central"/>
</dbReference>
<dbReference type="GO" id="GO:0009949">
    <property type="term" value="P:polarity specification of anterior/posterior axis"/>
    <property type="evidence" value="ECO:0000315"/>
    <property type="project" value="UniProtKB"/>
</dbReference>
<dbReference type="GO" id="GO:0016567">
    <property type="term" value="P:protein ubiquitination"/>
    <property type="evidence" value="ECO:0000318"/>
    <property type="project" value="GO_Central"/>
</dbReference>
<dbReference type="GO" id="GO:0006412">
    <property type="term" value="P:translation"/>
    <property type="evidence" value="ECO:0007669"/>
    <property type="project" value="InterPro"/>
</dbReference>
<dbReference type="CDD" id="cd01803">
    <property type="entry name" value="Ubl_ubiquitin"/>
    <property type="match status" value="1"/>
</dbReference>
<dbReference type="FunFam" id="3.10.20.90:FF:000014">
    <property type="entry name" value="Ubiquitin-60S ribosomal L40 fusion"/>
    <property type="match status" value="1"/>
</dbReference>
<dbReference type="FunFam" id="4.10.1060.50:FF:000001">
    <property type="entry name" value="ubiquitin-60S ribosomal protein L40"/>
    <property type="match status" value="1"/>
</dbReference>
<dbReference type="Gene3D" id="4.10.1060.50">
    <property type="match status" value="1"/>
</dbReference>
<dbReference type="Gene3D" id="3.10.20.90">
    <property type="entry name" value="Phosphatidylinositol 3-kinase Catalytic Subunit, Chain A, domain 1"/>
    <property type="match status" value="1"/>
</dbReference>
<dbReference type="InterPro" id="IPR001975">
    <property type="entry name" value="Ribosomal_eL40_dom"/>
</dbReference>
<dbReference type="InterPro" id="IPR038587">
    <property type="entry name" value="Ribosomal_eL40_sf"/>
</dbReference>
<dbReference type="InterPro" id="IPR000626">
    <property type="entry name" value="Ubiquitin-like_dom"/>
</dbReference>
<dbReference type="InterPro" id="IPR029071">
    <property type="entry name" value="Ubiquitin-like_domsf"/>
</dbReference>
<dbReference type="InterPro" id="IPR019954">
    <property type="entry name" value="Ubiquitin_CS"/>
</dbReference>
<dbReference type="InterPro" id="IPR019956">
    <property type="entry name" value="Ubiquitin_dom"/>
</dbReference>
<dbReference type="InterPro" id="IPR050158">
    <property type="entry name" value="Ubiquitin_ubiquitin-like"/>
</dbReference>
<dbReference type="PANTHER" id="PTHR10666">
    <property type="entry name" value="UBIQUITIN"/>
    <property type="match status" value="1"/>
</dbReference>
<dbReference type="Pfam" id="PF01020">
    <property type="entry name" value="Ribosomal_L40e"/>
    <property type="match status" value="1"/>
</dbReference>
<dbReference type="Pfam" id="PF00240">
    <property type="entry name" value="ubiquitin"/>
    <property type="match status" value="1"/>
</dbReference>
<dbReference type="PRINTS" id="PR00348">
    <property type="entry name" value="UBIQUITIN"/>
</dbReference>
<dbReference type="SMART" id="SM01377">
    <property type="entry name" value="Ribosomal_L40e"/>
    <property type="match status" value="1"/>
</dbReference>
<dbReference type="SMART" id="SM00213">
    <property type="entry name" value="UBQ"/>
    <property type="match status" value="1"/>
</dbReference>
<dbReference type="SUPFAM" id="SSF54236">
    <property type="entry name" value="Ubiquitin-like"/>
    <property type="match status" value="1"/>
</dbReference>
<dbReference type="PROSITE" id="PS00299">
    <property type="entry name" value="UBIQUITIN_1"/>
    <property type="match status" value="1"/>
</dbReference>
<dbReference type="PROSITE" id="PS50053">
    <property type="entry name" value="UBIQUITIN_2"/>
    <property type="match status" value="1"/>
</dbReference>
<protein>
    <recommendedName>
        <fullName evidence="3">Ubiquitin-ribosomal protein eL40 fusion protein</fullName>
    </recommendedName>
    <alternativeName>
        <fullName>CEP52</fullName>
    </alternativeName>
    <component>
        <recommendedName>
            <fullName>Ubiquitin</fullName>
        </recommendedName>
    </component>
    <component>
        <recommendedName>
            <fullName evidence="3">Large ribosomal subunit protein eL40</fullName>
        </recommendedName>
        <alternativeName>
            <fullName>60S ribosomal protein L40</fullName>
        </alternativeName>
    </component>
</protein>
<name>RL40_CAEEL</name>
<organism>
    <name type="scientific">Caenorhabditis elegans</name>
    <dbReference type="NCBI Taxonomy" id="6239"/>
    <lineage>
        <taxon>Eukaryota</taxon>
        <taxon>Metazoa</taxon>
        <taxon>Ecdysozoa</taxon>
        <taxon>Nematoda</taxon>
        <taxon>Chromadorea</taxon>
        <taxon>Rhabditida</taxon>
        <taxon>Rhabditina</taxon>
        <taxon>Rhabditomorpha</taxon>
        <taxon>Rhabditoidea</taxon>
        <taxon>Rhabditidae</taxon>
        <taxon>Peloderinae</taxon>
        <taxon>Caenorhabditis</taxon>
    </lineage>
</organism>
<feature type="chain" id="PRO_0000396444" description="Ubiquitin">
    <location>
        <begin position="1"/>
        <end position="76"/>
    </location>
</feature>
<feature type="chain" id="PRO_0000396445" description="Large ribosomal subunit protein eL40">
    <location>
        <begin position="77"/>
        <end position="128"/>
    </location>
</feature>
<feature type="domain" description="Ubiquitin-like" evidence="2">
    <location>
        <begin position="1"/>
        <end position="76"/>
    </location>
</feature>
<feature type="cross-link" description="Glycyl lysine isopeptide (Lys-Gly) (interchain with G-Cter in ubiquitin)" evidence="1">
    <location>
        <position position="48"/>
    </location>
</feature>
<feature type="cross-link" description="Glycyl lysine isopeptide (Gly-Lys) (interchain with K-? in acceptor proteins)" evidence="2">
    <location>
        <position position="76"/>
    </location>
</feature>
<keyword id="KW-0002">3D-structure</keyword>
<keyword id="KW-0963">Cytoplasm</keyword>
<keyword id="KW-1017">Isopeptide bond</keyword>
<keyword id="KW-0539">Nucleus</keyword>
<keyword id="KW-1185">Reference proteome</keyword>
<keyword id="KW-0687">Ribonucleoprotein</keyword>
<keyword id="KW-0689">Ribosomal protein</keyword>
<keyword id="KW-0832">Ubl conjugation</keyword>
<evidence type="ECO:0000250" key="1"/>
<evidence type="ECO:0000255" key="2">
    <source>
        <dbReference type="PROSITE-ProRule" id="PRU00214"/>
    </source>
</evidence>
<evidence type="ECO:0000305" key="3"/>
<proteinExistence type="evidence at protein level"/>
<reference key="1">
    <citation type="journal article" date="1995" name="Dev. Biol.">
        <title>A portable regulatory element directs specific expression of the Caenorhabditis elegans ubiquitin gene ubq-2 in the somatic gonad.</title>
        <authorList>
            <person name="Jones D."/>
            <person name="Stringham E.G."/>
            <person name="Graham R.W."/>
            <person name="Candido E.P.M."/>
        </authorList>
    </citation>
    <scope>NUCLEOTIDE SEQUENCE [GENOMIC DNA]</scope>
    <source>
        <strain>Bristol N2</strain>
    </source>
</reference>
<reference key="2">
    <citation type="journal article" date="1998" name="Science">
        <title>Genome sequence of the nematode C. elegans: a platform for investigating biology.</title>
        <authorList>
            <consortium name="The C. elegans sequencing consortium"/>
        </authorList>
    </citation>
    <scope>NUCLEOTIDE SEQUENCE [LARGE SCALE GENOMIC DNA]</scope>
    <source>
        <strain>Bristol N2</strain>
    </source>
</reference>
<accession>P49632</accession>
<accession>P14792</accession>
<accession>Q9U1P3</accession>
<comment type="function">
    <molecule>Ubiquitin</molecule>
    <text evidence="1">Exists either covalently attached to another protein, or free (unanchored). When covalently bound, it is conjugated to target proteins via an isopeptide bond either as a monomer (monoubiquitin), a polymer linked via different Lys residues of the ubiquitin (polyubiquitin chains) or a linear polymer linked via the initiator Met of the ubiquitin (linear polyubiquitin chains). Polyubiquitin chains, when attached to a target protein, have different functions depending on the Lys residue of the ubiquitin that is linked: Lys-48-linked is involved in protein degradation via the proteasome. Linear polymer chains formed via attachment by the initiator Met lead to cell signaling. Ubiquitin is usually conjugated to Lys residues of target proteins, however, in rare cases, conjugation to Cys or Ser residues has been observed. When polyubiquitin is free (unanchored-polyubiquitin), it also has distinct roles, such as in activation of protein kinases, and in signaling (By similarity).</text>
</comment>
<comment type="function">
    <molecule>Large ribosomal subunit protein eL40</molecule>
    <text evidence="1">Component of the 60S subunit of the ribosome.</text>
</comment>
<comment type="subunit">
    <molecule>Large ribosomal subunit protein eL40</molecule>
    <text evidence="1">Part of the 60S ribosomal subunit.</text>
</comment>
<comment type="subcellular location">
    <molecule>Ubiquitin</molecule>
    <subcellularLocation>
        <location evidence="1">Cytoplasm</location>
    </subcellularLocation>
    <subcellularLocation>
        <location evidence="1">Nucleus</location>
    </subcellularLocation>
</comment>
<comment type="subcellular location">
    <molecule>Large ribosomal subunit protein eL40</molecule>
    <subcellularLocation>
        <location evidence="1">Cytoplasm</location>
    </subcellularLocation>
</comment>
<comment type="miscellaneous">
    <text>In C.elegans ubiquitin is encoded by 2 different genes. ubq-2 gene codes for a single copy of ubiquitin fused to the ribosomal protein eL40. ubq-1 gene codes for a polyubiquitin precursor with exact head to tail repeats.</text>
</comment>
<comment type="miscellaneous">
    <text>For a better understanding, features related to ubiquitin are only indicated for the first chain.</text>
</comment>
<comment type="similarity">
    <text evidence="3">In the N-terminal section; belongs to the ubiquitin family.</text>
</comment>
<comment type="similarity">
    <text evidence="3">In the C-terminal section; belongs to the eukaryotic ribosomal protein eL40 family.</text>
</comment>
<sequence length="128" mass="14651">MQIFVKTLTGKTITLEVEASDTIENVKAKIQDKEGIPPDQQRLIFAGKQLEDGRTLSDYNIQKESTLHLVLRLRGGIIEPSLRQLAQKYNCDKQICRKCYARLPPRASNCRKKKCGHSSELRIKKKLK</sequence>